<comment type="function">
    <text>Involved in the targeting and/or fusion of transport vesicles to their target membrane.</text>
</comment>
<comment type="subunit">
    <text>Interacts with VAPA and VAPB.</text>
</comment>
<comment type="interaction">
    <interactant intactId="EBI-10201335">
        <id>P23763</id>
    </interactant>
    <interactant intactId="EBI-749265">
        <id>Q8N6L0</id>
        <label>KASH5</label>
    </interactant>
    <organismsDiffer>false</organismsDiffer>
    <experiments>3</experiments>
</comment>
<comment type="interaction">
    <interactant intactId="EBI-10201335">
        <id>P23763</id>
    </interactant>
    <interactant intactId="EBI-490676">
        <id>O95721</id>
        <label>SNAP29</label>
    </interactant>
    <organismsDiffer>false</organismsDiffer>
    <experiments>3</experiments>
</comment>
<comment type="interaction">
    <interactant intactId="EBI-10201335">
        <id>P23763</id>
    </interactant>
    <interactant intactId="EBI-744942">
        <id>Q12846</id>
        <label>STX4</label>
    </interactant>
    <organismsDiffer>false</organismsDiffer>
    <experiments>3</experiments>
</comment>
<comment type="interaction">
    <interactant intactId="EBI-12097582">
        <id>P23763-3</id>
    </interactant>
    <interactant intactId="EBI-13059134">
        <id>Q13520</id>
        <label>AQP6</label>
    </interactant>
    <organismsDiffer>false</organismsDiffer>
    <experiments>3</experiments>
</comment>
<comment type="interaction">
    <interactant intactId="EBI-12097582">
        <id>P23763-3</id>
    </interactant>
    <interactant intactId="EBI-11343438">
        <id>Q3SXY8</id>
        <label>ARL13B</label>
    </interactant>
    <organismsDiffer>false</organismsDiffer>
    <experiments>3</experiments>
</comment>
<comment type="interaction">
    <interactant intactId="EBI-12097582">
        <id>P23763-3</id>
    </interactant>
    <interactant intactId="EBI-17233035">
        <id>Q9BUF7-2</id>
        <label>CRB3</label>
    </interactant>
    <organismsDiffer>false</organismsDiffer>
    <experiments>3</experiments>
</comment>
<comment type="interaction">
    <interactant intactId="EBI-12097582">
        <id>P23763-3</id>
    </interactant>
    <interactant intactId="EBI-6942903">
        <id>Q96BA8</id>
        <label>CREB3L1</label>
    </interactant>
    <organismsDiffer>false</organismsDiffer>
    <experiments>3</experiments>
</comment>
<comment type="interaction">
    <interactant intactId="EBI-12097582">
        <id>P23763-3</id>
    </interactant>
    <interactant intactId="EBI-1046040">
        <id>P00387</id>
        <label>CYB5R3</label>
    </interactant>
    <organismsDiffer>false</organismsDiffer>
    <experiments>3</experiments>
</comment>
<comment type="interaction">
    <interactant intactId="EBI-12097582">
        <id>P23763-3</id>
    </interactant>
    <interactant intactId="EBI-3915253">
        <id>Q15125</id>
        <label>EBP</label>
    </interactant>
    <organismsDiffer>false</organismsDiffer>
    <experiments>3</experiments>
</comment>
<comment type="interaction">
    <interactant intactId="EBI-12097582">
        <id>P23763-3</id>
    </interactant>
    <interactant intactId="EBI-18535450">
        <id>Q9GZR5</id>
        <label>ELOVL4</label>
    </interactant>
    <organismsDiffer>false</organismsDiffer>
    <experiments>3</experiments>
</comment>
<comment type="interaction">
    <interactant intactId="EBI-12097582">
        <id>P23763-3</id>
    </interactant>
    <interactant intactId="EBI-10285373">
        <id>A1L3X0</id>
        <label>ELOVL7</label>
    </interactant>
    <organismsDiffer>false</organismsDiffer>
    <experiments>3</experiments>
</comment>
<comment type="interaction">
    <interactant intactId="EBI-12097582">
        <id>P23763-3</id>
    </interactant>
    <interactant intactId="EBI-781551">
        <id>Q9Y282</id>
        <label>ERGIC3</label>
    </interactant>
    <organismsDiffer>false</organismsDiffer>
    <experiments>3</experiments>
</comment>
<comment type="interaction">
    <interactant intactId="EBI-12097582">
        <id>P23763-3</id>
    </interactant>
    <interactant intactId="EBI-18938272">
        <id>Q96KR6</id>
        <label>FAM210B</label>
    </interactant>
    <organismsDiffer>false</organismsDiffer>
    <experiments>3</experiments>
</comment>
<comment type="interaction">
    <interactant intactId="EBI-12097582">
        <id>P23763-3</id>
    </interactant>
    <interactant intactId="EBI-13345167">
        <id>Q8TDT2</id>
        <label>GPR152</label>
    </interactant>
    <organismsDiffer>false</organismsDiffer>
    <experiments>3</experiments>
</comment>
<comment type="interaction">
    <interactant intactId="EBI-12097582">
        <id>P23763-3</id>
    </interactant>
    <interactant intactId="EBI-2865663">
        <id>Q13571</id>
        <label>LAPTM5</label>
    </interactant>
    <organismsDiffer>false</organismsDiffer>
    <experiments>3</experiments>
</comment>
<comment type="interaction">
    <interactant intactId="EBI-12097582">
        <id>P23763-3</id>
    </interactant>
    <interactant intactId="EBI-7545592">
        <id>Q9H6H4</id>
        <label>REEP4</label>
    </interactant>
    <organismsDiffer>false</organismsDiffer>
    <experiments>3</experiments>
</comment>
<comment type="interaction">
    <interactant intactId="EBI-12097582">
        <id>P23763-3</id>
    </interactant>
    <interactant intactId="EBI-10192441">
        <id>Q86VR2</id>
        <label>RETREG3</label>
    </interactant>
    <organismsDiffer>false</organismsDiffer>
    <experiments>3</experiments>
</comment>
<comment type="interaction">
    <interactant intactId="EBI-12097582">
        <id>P23763-3</id>
    </interactant>
    <interactant intactId="EBI-13044680">
        <id>Q9Y225-2</id>
        <label>RNF24</label>
    </interactant>
    <organismsDiffer>false</organismsDiffer>
    <experiments>3</experiments>
</comment>
<comment type="interaction">
    <interactant intactId="EBI-12097582">
        <id>P23763-3</id>
    </interactant>
    <interactant intactId="EBI-17247926">
        <id>Q9NY72</id>
        <label>SCN3B</label>
    </interactant>
    <organismsDiffer>false</organismsDiffer>
    <experiments>3</experiments>
</comment>
<comment type="interaction">
    <interactant intactId="EBI-12097582">
        <id>P23763-3</id>
    </interactant>
    <interactant intactId="EBI-2855401">
        <id>Q9BY50</id>
        <label>SEC11C</label>
    </interactant>
    <organismsDiffer>false</organismsDiffer>
    <experiments>3</experiments>
</comment>
<comment type="interaction">
    <interactant intactId="EBI-12097582">
        <id>P23763-3</id>
    </interactant>
    <interactant intactId="EBI-10977284">
        <id>Q8NHU3</id>
        <label>SGMS2</label>
    </interactant>
    <organismsDiffer>false</organismsDiffer>
    <experiments>3</experiments>
</comment>
<comment type="interaction">
    <interactant intactId="EBI-12097582">
        <id>P23763-3</id>
    </interactant>
    <interactant intactId="EBI-10262251">
        <id>Q8IWU4</id>
        <label>SLC30A8</label>
    </interactant>
    <organismsDiffer>false</organismsDiffer>
    <experiments>3</experiments>
</comment>
<comment type="interaction">
    <interactant intactId="EBI-12097582">
        <id>P23763-3</id>
    </interactant>
    <interactant intactId="EBI-712466">
        <id>Q16623</id>
        <label>STX1A</label>
    </interactant>
    <organismsDiffer>false</organismsDiffer>
    <experiments>3</experiments>
</comment>
<comment type="interaction">
    <interactant intactId="EBI-12097582">
        <id>P23763-3</id>
    </interactant>
    <interactant intactId="EBI-9071709">
        <id>P61266</id>
        <label>STX1B</label>
    </interactant>
    <organismsDiffer>false</organismsDiffer>
    <experiments>3</experiments>
</comment>
<comment type="interaction">
    <interactant intactId="EBI-12097582">
        <id>P23763-3</id>
    </interactant>
    <interactant intactId="EBI-744942">
        <id>Q12846</id>
        <label>STX4</label>
    </interactant>
    <organismsDiffer>false</organismsDiffer>
    <experiments>3</experiments>
</comment>
<comment type="interaction">
    <interactant intactId="EBI-12097582">
        <id>P23763-3</id>
    </interactant>
    <interactant intactId="EBI-3922699">
        <id>Q96IK0</id>
        <label>TMEM101</label>
    </interactant>
    <organismsDiffer>false</organismsDiffer>
    <experiments>3</experiments>
</comment>
<comment type="interaction">
    <interactant intactId="EBI-12097582">
        <id>P23763-3</id>
    </interactant>
    <interactant intactId="EBI-8638294">
        <id>Q9NUH8</id>
        <label>TMEM14B</label>
    </interactant>
    <organismsDiffer>false</organismsDiffer>
    <experiments>3</experiments>
</comment>
<comment type="interaction">
    <interactant intactId="EBI-12097582">
        <id>P23763-3</id>
    </interactant>
    <interactant intactId="EBI-11722971">
        <id>Q53FP2</id>
        <label>TMEM35A</label>
    </interactant>
    <organismsDiffer>false</organismsDiffer>
    <experiments>3</experiments>
</comment>
<comment type="interaction">
    <interactant intactId="EBI-12097582">
        <id>P23763-3</id>
    </interactant>
    <interactant intactId="EBI-6447886">
        <id>Q9Y320</id>
        <label>TMX2</label>
    </interactant>
    <organismsDiffer>false</organismsDiffer>
    <experiments>3</experiments>
</comment>
<comment type="interaction">
    <interactant intactId="EBI-12097582">
        <id>P23763-3</id>
    </interactant>
    <interactant intactId="EBI-396540">
        <id>Q12888</id>
        <label>TP53BP1</label>
    </interactant>
    <organismsDiffer>false</organismsDiffer>
    <experiments>3</experiments>
</comment>
<comment type="subcellular location">
    <molecule>Isoform 1</molecule>
    <subcellularLocation>
        <location evidence="1">Cytoplasmic vesicle</location>
        <location evidence="1">Secretory vesicle</location>
        <location evidence="1">Synaptic vesicle membrane</location>
        <topology evidence="1">Single-pass type IV membrane protein</topology>
    </subcellularLocation>
    <subcellularLocation>
        <location evidence="1">Synapse</location>
        <location evidence="1">Synaptosome</location>
    </subcellularLocation>
</comment>
<comment type="subcellular location">
    <molecule>Isoform 2</molecule>
    <subcellularLocation>
        <location evidence="1">Cytoplasmic vesicle membrane</location>
        <topology evidence="1">Single-pass type IV membrane protein</topology>
    </subcellularLocation>
    <subcellularLocation>
        <location evidence="1">Synapse</location>
        <location evidence="1">Synaptosome</location>
    </subcellularLocation>
</comment>
<comment type="subcellular location">
    <molecule>Isoform 3</molecule>
    <subcellularLocation>
        <location>Mitochondrion outer membrane</location>
        <topology evidence="12">Single-pass type IV membrane protein</topology>
    </subcellularLocation>
</comment>
<comment type="alternative products">
    <event type="alternative splicing"/>
    <isoform>
        <id>P23763-1</id>
        <name>1</name>
        <name>VAMP-1A</name>
        <sequence type="displayed"/>
    </isoform>
    <isoform>
        <id>P23763-3</id>
        <name>2</name>
        <sequence type="described" ref="VSP_029185"/>
    </isoform>
    <isoform>
        <id>P23763-2</id>
        <name>3</name>
        <name>VAMP-1B</name>
        <sequence type="described" ref="VSP_006325"/>
    </isoform>
</comment>
<comment type="tissue specificity">
    <text>Nervous system, skeletal muscle and adipose tissue.</text>
</comment>
<comment type="PTM">
    <text evidence="6 19">(Microbial infection) Targeted and hydrolyzed by C.botulinum neurotoxin type B (BoNT/B, botB) which probably hydrolyzes the 78-Gln-|-Phe-79 bond and inhibits neurotransmitter release (PubMed:22289120).</text>
</comment>
<comment type="PTM">
    <text evidence="6 18 19">(Microbial infection) Targeted and hydrolyzed by C.botulinum neurotoxin type D (BoNT/D, botD) which probably hydrolyzes the 61-Arg-|-Leu-62 bond and inhibits neurotransmitter release (PubMed:22289120). BoNT/D has low catalytic activity on this protein due to its sequence (PubMed:22289120). Note that humans are not known to be infected by C.botulinum type D.</text>
</comment>
<comment type="PTM">
    <text evidence="6 19">(Microbial infection) Targeted and hydrolyzed by C.botulinum neurotoxin type F (BoNT/F, botF) which probably hydrolyzes the 60-Gln-|-Lys-61 bond and inhibits neurotransmitter release (PubMed:22289120).</text>
</comment>
<comment type="PTM">
    <text evidence="11 20">(Microbial infection) Targeted and hydrolyzed by C.botulinum neurotoxin type X (BoNT/X) which probably hydrolyzes the 68-Arg-|-Ala-69 bond and inhibits neurotransmitter release (PubMed:29540745). It remains unknown whether BoNT/X is ever produced, or what organisms it targets.</text>
</comment>
<comment type="disease" evidence="7">
    <disease id="DI-04137">
        <name>Spastic ataxia 1, autosomal dominant</name>
        <acronym>SPAX1</acronym>
        <description>An autosomal dominant form of spastic ataxia, a progressive neurodegenerative disorder characterized by lower-limb spasticity and generalized ataxia with dysarthria, impaired ocular movements, and gait disturbance.</description>
        <dbReference type="MIM" id="108600"/>
    </disease>
    <text evidence="15">The disease is caused by variants affecting the gene represented in this entry. A mutation affecting a critical donor site for the splicing of VAMP1 isoforms leads to the loss of neuron-specific isoform 1 and subsequently results in haploinsufficiency (PubMed:22958904). Therefore, there would be less neurotransmitter exocytosis in specific regions of the brain, causing the symptoms of SPAX1.</text>
</comment>
<comment type="disease" evidence="8 9 10">
    <disease id="DI-05479">
        <name>Myasthenic syndrome, congenital, 25, presynaptic</name>
        <acronym>CMS25</acronym>
        <description>A form of congenital myasthenic syndrome, a group of disorders characterized by failure of neuromuscular transmission, including pre-synaptic, synaptic, and post-synaptic disorders that are not of autoimmune origin. Clinical features include easy fatigability and muscle weakness. CMS25 is an autosomal recessive form characterized by hypotonia and generalized muscle weakness apparent from birth. Affected individuals have feeding difficulties and delayed motor development, usually never achieving independent ambulation. Additional variable features include eye movement abnormalities, joint contractures, and rigid spine.</description>
        <dbReference type="MIM" id="618323"/>
    </disease>
    <text>The disease is caused by variants affecting the gene represented in this entry.</text>
</comment>
<comment type="similarity">
    <text evidence="18">Belongs to the synaptobrevin family.</text>
</comment>
<proteinExistence type="evidence at protein level"/>
<protein>
    <recommendedName>
        <fullName>Vesicle-associated membrane protein 1</fullName>
        <shortName>VAMP-1</shortName>
    </recommendedName>
    <alternativeName>
        <fullName>Synaptobrevin-1</fullName>
    </alternativeName>
</protein>
<sequence length="118" mass="12902">MSAPAQPPAEGTEGTAPGGGPPGPPPNMTSNRRLQQTQAQVEEVVDIIRVNVDKVLERDQKLSELDDRADALQAGASQFESSAAKLKRKYWWKNCKMMIMLGAICAIIVVVIVIYFFT</sequence>
<name>VAMP1_HUMAN</name>
<dbReference type="EMBL" id="M36200">
    <property type="protein sequence ID" value="AAA60603.1"/>
    <property type="molecule type" value="Genomic_DNA"/>
</dbReference>
<dbReference type="EMBL" id="M36196">
    <property type="protein sequence ID" value="AAA60603.1"/>
    <property type="status" value="JOINED"/>
    <property type="molecule type" value="Genomic_DNA"/>
</dbReference>
<dbReference type="EMBL" id="M36197">
    <property type="protein sequence ID" value="AAA60603.1"/>
    <property type="status" value="JOINED"/>
    <property type="molecule type" value="Genomic_DNA"/>
</dbReference>
<dbReference type="EMBL" id="M36198">
    <property type="protein sequence ID" value="AAA60603.1"/>
    <property type="status" value="JOINED"/>
    <property type="molecule type" value="Genomic_DNA"/>
</dbReference>
<dbReference type="EMBL" id="M36199">
    <property type="protein sequence ID" value="AAA60603.1"/>
    <property type="status" value="JOINED"/>
    <property type="molecule type" value="Genomic_DNA"/>
</dbReference>
<dbReference type="EMBL" id="AF060538">
    <property type="protein sequence ID" value="AAC28336.1"/>
    <property type="molecule type" value="mRNA"/>
</dbReference>
<dbReference type="EMBL" id="Z48924">
    <property type="protein sequence ID" value="CAA88760.1"/>
    <property type="molecule type" value="mRNA"/>
</dbReference>
<dbReference type="EMBL" id="CR542214">
    <property type="protein sequence ID" value="CAG47010.1"/>
    <property type="molecule type" value="mRNA"/>
</dbReference>
<dbReference type="EMBL" id="CR542231">
    <property type="protein sequence ID" value="CAG47027.1"/>
    <property type="molecule type" value="mRNA"/>
</dbReference>
<dbReference type="EMBL" id="CR749485">
    <property type="protein sequence ID" value="CAH18312.1"/>
    <property type="molecule type" value="mRNA"/>
</dbReference>
<dbReference type="EMBL" id="AC005840">
    <property type="status" value="NOT_ANNOTATED_CDS"/>
    <property type="molecule type" value="Genomic_DNA"/>
</dbReference>
<dbReference type="EMBL" id="CH471116">
    <property type="protein sequence ID" value="EAW88792.1"/>
    <property type="molecule type" value="Genomic_DNA"/>
</dbReference>
<dbReference type="EMBL" id="CH471116">
    <property type="protein sequence ID" value="EAW88795.1"/>
    <property type="molecule type" value="Genomic_DNA"/>
</dbReference>
<dbReference type="EMBL" id="CH471116">
    <property type="protein sequence ID" value="EAW88796.1"/>
    <property type="molecule type" value="Genomic_DNA"/>
</dbReference>
<dbReference type="EMBL" id="BC023286">
    <property type="protein sequence ID" value="AAH23286.1"/>
    <property type="molecule type" value="mRNA"/>
</dbReference>
<dbReference type="CCDS" id="CCDS31731.1">
    <molecule id="P23763-3"/>
</dbReference>
<dbReference type="CCDS" id="CCDS41740.1">
    <molecule id="P23763-1"/>
</dbReference>
<dbReference type="CCDS" id="CCDS44809.1">
    <molecule id="P23763-2"/>
</dbReference>
<dbReference type="PIR" id="A38315">
    <property type="entry name" value="A38315"/>
</dbReference>
<dbReference type="PIR" id="S52747">
    <property type="entry name" value="S52747"/>
</dbReference>
<dbReference type="RefSeq" id="NP_001284367.1">
    <property type="nucleotide sequence ID" value="NM_001297438.1"/>
</dbReference>
<dbReference type="RefSeq" id="NP_055046.1">
    <molecule id="P23763-1"/>
    <property type="nucleotide sequence ID" value="NM_014231.5"/>
</dbReference>
<dbReference type="RefSeq" id="NP_058439.1">
    <molecule id="P23763-2"/>
    <property type="nucleotide sequence ID" value="NM_016830.4"/>
</dbReference>
<dbReference type="RefSeq" id="NP_954740.1">
    <molecule id="P23763-3"/>
    <property type="nucleotide sequence ID" value="NM_199245.3"/>
</dbReference>
<dbReference type="SMR" id="P23763"/>
<dbReference type="BioGRID" id="112710">
    <property type="interactions" value="44"/>
</dbReference>
<dbReference type="CORUM" id="P23763"/>
<dbReference type="FunCoup" id="P23763">
    <property type="interactions" value="801"/>
</dbReference>
<dbReference type="IntAct" id="P23763">
    <property type="interactions" value="33"/>
</dbReference>
<dbReference type="MINT" id="P23763"/>
<dbReference type="STRING" id="9606.ENSP00000379602"/>
<dbReference type="DrugBank" id="DB00042">
    <property type="generic name" value="Botulinum toxin type B"/>
</dbReference>
<dbReference type="TCDB" id="1.F.1.1.1">
    <property type="family name" value="the synaptosomal vesicle fusion pore (svf-pore) family"/>
</dbReference>
<dbReference type="iPTMnet" id="P23763"/>
<dbReference type="PhosphoSitePlus" id="P23763"/>
<dbReference type="SwissPalm" id="P23763"/>
<dbReference type="BioMuta" id="VAMP1"/>
<dbReference type="DMDM" id="135093"/>
<dbReference type="jPOST" id="P23763"/>
<dbReference type="MassIVE" id="P23763"/>
<dbReference type="PaxDb" id="9606-ENSP00000379602"/>
<dbReference type="PeptideAtlas" id="P23763"/>
<dbReference type="ProteomicsDB" id="54157">
    <molecule id="P23763-1"/>
</dbReference>
<dbReference type="ProteomicsDB" id="54158">
    <molecule id="P23763-2"/>
</dbReference>
<dbReference type="ProteomicsDB" id="54159">
    <molecule id="P23763-3"/>
</dbReference>
<dbReference type="Antibodypedia" id="3460">
    <property type="antibodies" value="368 antibodies from 44 providers"/>
</dbReference>
<dbReference type="DNASU" id="6843"/>
<dbReference type="Ensembl" id="ENST00000361716.8">
    <molecule id="P23763-3"/>
    <property type="protein sequence ID" value="ENSP00000355122.3"/>
    <property type="gene ID" value="ENSG00000139190.17"/>
</dbReference>
<dbReference type="Ensembl" id="ENST00000396308.4">
    <molecule id="P23763-1"/>
    <property type="protein sequence ID" value="ENSP00000379602.3"/>
    <property type="gene ID" value="ENSG00000139190.17"/>
</dbReference>
<dbReference type="Ensembl" id="ENST00000400911.7">
    <molecule id="P23763-2"/>
    <property type="protein sequence ID" value="ENSP00000383702.3"/>
    <property type="gene ID" value="ENSG00000139190.17"/>
</dbReference>
<dbReference type="GeneID" id="6843"/>
<dbReference type="KEGG" id="hsa:6843"/>
<dbReference type="MANE-Select" id="ENST00000396308.4">
    <property type="protein sequence ID" value="ENSP00000379602.3"/>
    <property type="RefSeq nucleotide sequence ID" value="NM_014231.5"/>
    <property type="RefSeq protein sequence ID" value="NP_055046.1"/>
</dbReference>
<dbReference type="UCSC" id="uc001qoj.4">
    <molecule id="P23763-1"/>
    <property type="organism name" value="human"/>
</dbReference>
<dbReference type="AGR" id="HGNC:12642"/>
<dbReference type="CTD" id="6843"/>
<dbReference type="DisGeNET" id="6843"/>
<dbReference type="GeneCards" id="VAMP1"/>
<dbReference type="HGNC" id="HGNC:12642">
    <property type="gene designation" value="VAMP1"/>
</dbReference>
<dbReference type="HPA" id="ENSG00000139190">
    <property type="expression patterns" value="Tissue enhanced (brain)"/>
</dbReference>
<dbReference type="MalaCards" id="VAMP1"/>
<dbReference type="MIM" id="108600">
    <property type="type" value="phenotype"/>
</dbReference>
<dbReference type="MIM" id="185880">
    <property type="type" value="gene"/>
</dbReference>
<dbReference type="MIM" id="618323">
    <property type="type" value="phenotype"/>
</dbReference>
<dbReference type="neXtProt" id="NX_P23763"/>
<dbReference type="OpenTargets" id="ENSG00000139190"/>
<dbReference type="Orphanet" id="251282">
    <property type="disease" value="Autosomal dominant spastic ataxia type 1"/>
</dbReference>
<dbReference type="Orphanet" id="98914">
    <property type="disease" value="Presynaptic congenital myasthenic syndromes"/>
</dbReference>
<dbReference type="PharmGKB" id="PA37266"/>
<dbReference type="VEuPathDB" id="HostDB:ENSG00000139190"/>
<dbReference type="eggNOG" id="KOG0860">
    <property type="taxonomic scope" value="Eukaryota"/>
</dbReference>
<dbReference type="GeneTree" id="ENSGT00940000161390"/>
<dbReference type="HOGENOM" id="CLU_064620_4_0_1"/>
<dbReference type="InParanoid" id="P23763"/>
<dbReference type="OMA" id="CKYNTMK"/>
<dbReference type="OrthoDB" id="10042941at2759"/>
<dbReference type="PAN-GO" id="P23763">
    <property type="GO annotations" value="6 GO annotations based on evolutionary models"/>
</dbReference>
<dbReference type="PhylomeDB" id="P23763"/>
<dbReference type="TreeFam" id="TF313666"/>
<dbReference type="PathwayCommons" id="P23763"/>
<dbReference type="Reactome" id="R-HSA-5250955">
    <property type="pathway name" value="Toxicity of botulinum toxin type D (botD)"/>
</dbReference>
<dbReference type="Reactome" id="R-HSA-5250981">
    <property type="pathway name" value="Toxicity of botulinum toxin type F (botF)"/>
</dbReference>
<dbReference type="Reactome" id="R-HSA-5250989">
    <property type="pathway name" value="Toxicity of botulinum toxin type G (botG)"/>
</dbReference>
<dbReference type="SABIO-RK" id="P23763"/>
<dbReference type="SignaLink" id="P23763"/>
<dbReference type="BioGRID-ORCS" id="6843">
    <property type="hits" value="11 hits in 1174 CRISPR screens"/>
</dbReference>
<dbReference type="ChiTaRS" id="VAMP1">
    <property type="organism name" value="human"/>
</dbReference>
<dbReference type="GeneWiki" id="VAMP1"/>
<dbReference type="GenomeRNAi" id="6843"/>
<dbReference type="Pharos" id="P23763">
    <property type="development level" value="Tbio"/>
</dbReference>
<dbReference type="PRO" id="PR:P23763"/>
<dbReference type="Proteomes" id="UP000005640">
    <property type="component" value="Chromosome 12"/>
</dbReference>
<dbReference type="RNAct" id="P23763">
    <property type="molecule type" value="protein"/>
</dbReference>
<dbReference type="Bgee" id="ENSG00000139190">
    <property type="expression patterns" value="Expressed in pons and 186 other cell types or tissues"/>
</dbReference>
<dbReference type="ExpressionAtlas" id="P23763">
    <property type="expression patterns" value="baseline and differential"/>
</dbReference>
<dbReference type="GO" id="GO:0005829">
    <property type="term" value="C:cytosol"/>
    <property type="evidence" value="ECO:0000304"/>
    <property type="project" value="Reactome"/>
</dbReference>
<dbReference type="GO" id="GO:0005741">
    <property type="term" value="C:mitochondrial outer membrane"/>
    <property type="evidence" value="ECO:0007669"/>
    <property type="project" value="UniProtKB-SubCell"/>
</dbReference>
<dbReference type="GO" id="GO:0043005">
    <property type="term" value="C:neuron projection"/>
    <property type="evidence" value="ECO:0007669"/>
    <property type="project" value="UniProtKB-KW"/>
</dbReference>
<dbReference type="GO" id="GO:0005886">
    <property type="term" value="C:plasma membrane"/>
    <property type="evidence" value="ECO:0000318"/>
    <property type="project" value="GO_Central"/>
</dbReference>
<dbReference type="GO" id="GO:0031201">
    <property type="term" value="C:SNARE complex"/>
    <property type="evidence" value="ECO:0000318"/>
    <property type="project" value="GO_Central"/>
</dbReference>
<dbReference type="GO" id="GO:0035579">
    <property type="term" value="C:specific granule membrane"/>
    <property type="evidence" value="ECO:0000314"/>
    <property type="project" value="UniProtKB"/>
</dbReference>
<dbReference type="GO" id="GO:0030672">
    <property type="term" value="C:synaptic vesicle membrane"/>
    <property type="evidence" value="ECO:0000304"/>
    <property type="project" value="Reactome"/>
</dbReference>
<dbReference type="GO" id="GO:0070821">
    <property type="term" value="C:tertiary granule membrane"/>
    <property type="evidence" value="ECO:0000314"/>
    <property type="project" value="UniProtKB"/>
</dbReference>
<dbReference type="GO" id="GO:0005484">
    <property type="term" value="F:SNAP receptor activity"/>
    <property type="evidence" value="ECO:0000318"/>
    <property type="project" value="GO_Central"/>
</dbReference>
<dbReference type="GO" id="GO:0019905">
    <property type="term" value="F:syntaxin binding"/>
    <property type="evidence" value="ECO:0000318"/>
    <property type="project" value="GO_Central"/>
</dbReference>
<dbReference type="GO" id="GO:0035493">
    <property type="term" value="P:SNARE complex assembly"/>
    <property type="evidence" value="ECO:0000318"/>
    <property type="project" value="GO_Central"/>
</dbReference>
<dbReference type="GO" id="GO:0006906">
    <property type="term" value="P:vesicle fusion"/>
    <property type="evidence" value="ECO:0000318"/>
    <property type="project" value="GO_Central"/>
</dbReference>
<dbReference type="CDD" id="cd15870">
    <property type="entry name" value="R-SNARE_VAMP2"/>
    <property type="match status" value="1"/>
</dbReference>
<dbReference type="FunFam" id="1.20.5.110:FF:000013">
    <property type="entry name" value="Vesicle-associated membrane protein 2"/>
    <property type="match status" value="1"/>
</dbReference>
<dbReference type="Gene3D" id="1.20.5.110">
    <property type="match status" value="1"/>
</dbReference>
<dbReference type="InterPro" id="IPR001388">
    <property type="entry name" value="Synaptobrevin-like"/>
</dbReference>
<dbReference type="InterPro" id="IPR016444">
    <property type="entry name" value="Synaptobrevin/VAMP"/>
</dbReference>
<dbReference type="InterPro" id="IPR042855">
    <property type="entry name" value="V_SNARE_CC"/>
</dbReference>
<dbReference type="PANTHER" id="PTHR45701">
    <property type="entry name" value="SYNAPTOBREVIN FAMILY MEMBER"/>
    <property type="match status" value="1"/>
</dbReference>
<dbReference type="Pfam" id="PF00957">
    <property type="entry name" value="Synaptobrevin"/>
    <property type="match status" value="1"/>
</dbReference>
<dbReference type="PIRSF" id="PIRSF005409">
    <property type="entry name" value="Synaptobrevin_euk"/>
    <property type="match status" value="1"/>
</dbReference>
<dbReference type="PRINTS" id="PR00219">
    <property type="entry name" value="SYNAPTOBREVN"/>
</dbReference>
<dbReference type="SUPFAM" id="SSF58038">
    <property type="entry name" value="SNARE fusion complex"/>
    <property type="match status" value="1"/>
</dbReference>
<dbReference type="PROSITE" id="PS00417">
    <property type="entry name" value="SYNAPTOBREVIN"/>
    <property type="match status" value="1"/>
</dbReference>
<dbReference type="PROSITE" id="PS50892">
    <property type="entry name" value="V_SNARE"/>
    <property type="match status" value="1"/>
</dbReference>
<keyword id="KW-0025">Alternative splicing</keyword>
<keyword id="KW-0175">Coiled coil</keyword>
<keyword id="KW-1004">Congenital myasthenic syndrome</keyword>
<keyword id="KW-0968">Cytoplasmic vesicle</keyword>
<keyword id="KW-0225">Disease variant</keyword>
<keyword id="KW-0472">Membrane</keyword>
<keyword id="KW-0496">Mitochondrion</keyword>
<keyword id="KW-1000">Mitochondrion outer membrane</keyword>
<keyword id="KW-0523">Neurodegeneration</keyword>
<keyword id="KW-0597">Phosphoprotein</keyword>
<keyword id="KW-1267">Proteomics identification</keyword>
<keyword id="KW-1185">Reference proteome</keyword>
<keyword id="KW-0770">Synapse</keyword>
<keyword id="KW-0771">Synaptosome</keyword>
<keyword id="KW-0812">Transmembrane</keyword>
<keyword id="KW-1133">Transmembrane helix</keyword>
<accession>P23763</accession>
<accession>A8MVP3</accession>
<accession>D3DUR3</accession>
<accession>O75468</accession>
<accession>Q15857</accession>
<accession>Q6FG94</accession>
<accession>Q8IVC9</accession>
<gene>
    <name type="primary">VAMP1</name>
    <name type="synonym">SYB1</name>
</gene>
<reference key="1">
    <citation type="journal article" date="1990" name="J. Biol. Chem.">
        <title>Structures and chromosomal localizations of two human genes encoding synaptobrevins 1 and 2.</title>
        <authorList>
            <person name="Archer B.T. III"/>
            <person name="Oezcelik T."/>
            <person name="Jahn R."/>
            <person name="Francke U."/>
            <person name="Suedhof T.C."/>
        </authorList>
    </citation>
    <scope>NUCLEOTIDE SEQUENCE [GENOMIC DNA] (ISOFORM 1)</scope>
</reference>
<reference key="2">
    <citation type="journal article" date="1998" name="Mol. Biol. Cell">
        <title>A splice-isoform of vesicle-associated membrane protein-1 (VAMP-1) contains a mitochondrial targeting signal.</title>
        <authorList>
            <person name="Isenmann S."/>
            <person name="Khew-Goodall Y."/>
            <person name="Gamble J."/>
            <person name="Vadas M."/>
            <person name="Wattenberg B.W."/>
        </authorList>
    </citation>
    <scope>NUCLEOTIDE SEQUENCE [MRNA] (ISOFORM 3)</scope>
    <scope>SUBCELLULAR LOCATION</scope>
    <source>
        <tissue>Umbilical vein</tissue>
    </source>
</reference>
<reference key="3">
    <citation type="submission" date="1995-03" db="EMBL/GenBank/DDBJ databases">
        <authorList>
            <person name="Gough K.H."/>
            <person name="Verkuylen A."/>
            <person name="Cosgrove L."/>
            <person name="Frenkel M.J."/>
            <person name="Ward C.W."/>
        </authorList>
    </citation>
    <scope>NUCLEOTIDE SEQUENCE [MRNA] (ISOFORM 1)</scope>
    <source>
        <tissue>Skeletal muscle</tissue>
    </source>
</reference>
<reference key="4">
    <citation type="submission" date="2004-06" db="EMBL/GenBank/DDBJ databases">
        <title>Cloning of human full open reading frames in Gateway(TM) system entry vector (pDONR201).</title>
        <authorList>
            <person name="Ebert L."/>
            <person name="Schick M."/>
            <person name="Neubert P."/>
            <person name="Schatten R."/>
            <person name="Henze S."/>
            <person name="Korn B."/>
        </authorList>
    </citation>
    <scope>NUCLEOTIDE SEQUENCE [LARGE SCALE MRNA] (ISOFORM 3)</scope>
</reference>
<reference key="5">
    <citation type="journal article" date="2007" name="BMC Genomics">
        <title>The full-ORF clone resource of the German cDNA consortium.</title>
        <authorList>
            <person name="Bechtel S."/>
            <person name="Rosenfelder H."/>
            <person name="Duda A."/>
            <person name="Schmidt C.P."/>
            <person name="Ernst U."/>
            <person name="Wellenreuther R."/>
            <person name="Mehrle A."/>
            <person name="Schuster C."/>
            <person name="Bahr A."/>
            <person name="Bloecker H."/>
            <person name="Heubner D."/>
            <person name="Hoerlein A."/>
            <person name="Michel G."/>
            <person name="Wedler H."/>
            <person name="Koehrer K."/>
            <person name="Ottenwaelder B."/>
            <person name="Poustka A."/>
            <person name="Wiemann S."/>
            <person name="Schupp I."/>
        </authorList>
    </citation>
    <scope>NUCLEOTIDE SEQUENCE [LARGE SCALE MRNA] (ISOFORM 2)</scope>
    <source>
        <tissue>Uterus</tissue>
    </source>
</reference>
<reference key="6">
    <citation type="journal article" date="2006" name="Nature">
        <title>The finished DNA sequence of human chromosome 12.</title>
        <authorList>
            <person name="Scherer S.E."/>
            <person name="Muzny D.M."/>
            <person name="Buhay C.J."/>
            <person name="Chen R."/>
            <person name="Cree A."/>
            <person name="Ding Y."/>
            <person name="Dugan-Rocha S."/>
            <person name="Gill R."/>
            <person name="Gunaratne P."/>
            <person name="Harris R.A."/>
            <person name="Hawes A.C."/>
            <person name="Hernandez J."/>
            <person name="Hodgson A.V."/>
            <person name="Hume J."/>
            <person name="Jackson A."/>
            <person name="Khan Z.M."/>
            <person name="Kovar-Smith C."/>
            <person name="Lewis L.R."/>
            <person name="Lozado R.J."/>
            <person name="Metzker M.L."/>
            <person name="Milosavljevic A."/>
            <person name="Miner G.R."/>
            <person name="Montgomery K.T."/>
            <person name="Morgan M.B."/>
            <person name="Nazareth L.V."/>
            <person name="Scott G."/>
            <person name="Sodergren E."/>
            <person name="Song X.-Z."/>
            <person name="Steffen D."/>
            <person name="Lovering R.C."/>
            <person name="Wheeler D.A."/>
            <person name="Worley K.C."/>
            <person name="Yuan Y."/>
            <person name="Zhang Z."/>
            <person name="Adams C.Q."/>
            <person name="Ansari-Lari M.A."/>
            <person name="Ayele M."/>
            <person name="Brown M.J."/>
            <person name="Chen G."/>
            <person name="Chen Z."/>
            <person name="Clerc-Blankenburg K.P."/>
            <person name="Davis C."/>
            <person name="Delgado O."/>
            <person name="Dinh H.H."/>
            <person name="Draper H."/>
            <person name="Gonzalez-Garay M.L."/>
            <person name="Havlak P."/>
            <person name="Jackson L.R."/>
            <person name="Jacob L.S."/>
            <person name="Kelly S.H."/>
            <person name="Li L."/>
            <person name="Li Z."/>
            <person name="Liu J."/>
            <person name="Liu W."/>
            <person name="Lu J."/>
            <person name="Maheshwari M."/>
            <person name="Nguyen B.-V."/>
            <person name="Okwuonu G.O."/>
            <person name="Pasternak S."/>
            <person name="Perez L.M."/>
            <person name="Plopper F.J.H."/>
            <person name="Santibanez J."/>
            <person name="Shen H."/>
            <person name="Tabor P.E."/>
            <person name="Verduzco D."/>
            <person name="Waldron L."/>
            <person name="Wang Q."/>
            <person name="Williams G.A."/>
            <person name="Zhang J."/>
            <person name="Zhou J."/>
            <person name="Allen C.C."/>
            <person name="Amin A.G."/>
            <person name="Anyalebechi V."/>
            <person name="Bailey M."/>
            <person name="Barbaria J.A."/>
            <person name="Bimage K.E."/>
            <person name="Bryant N.P."/>
            <person name="Burch P.E."/>
            <person name="Burkett C.E."/>
            <person name="Burrell K.L."/>
            <person name="Calderon E."/>
            <person name="Cardenas V."/>
            <person name="Carter K."/>
            <person name="Casias K."/>
            <person name="Cavazos I."/>
            <person name="Cavazos S.R."/>
            <person name="Ceasar H."/>
            <person name="Chacko J."/>
            <person name="Chan S.N."/>
            <person name="Chavez D."/>
            <person name="Christopoulos C."/>
            <person name="Chu J."/>
            <person name="Cockrell R."/>
            <person name="Cox C.D."/>
            <person name="Dang M."/>
            <person name="Dathorne S.R."/>
            <person name="David R."/>
            <person name="Davis C.M."/>
            <person name="Davy-Carroll L."/>
            <person name="Deshazo D.R."/>
            <person name="Donlin J.E."/>
            <person name="D'Souza L."/>
            <person name="Eaves K.A."/>
            <person name="Egan A."/>
            <person name="Emery-Cohen A.J."/>
            <person name="Escotto M."/>
            <person name="Flagg N."/>
            <person name="Forbes L.D."/>
            <person name="Gabisi A.M."/>
            <person name="Garza M."/>
            <person name="Hamilton C."/>
            <person name="Henderson N."/>
            <person name="Hernandez O."/>
            <person name="Hines S."/>
            <person name="Hogues M.E."/>
            <person name="Huang M."/>
            <person name="Idlebird D.G."/>
            <person name="Johnson R."/>
            <person name="Jolivet A."/>
            <person name="Jones S."/>
            <person name="Kagan R."/>
            <person name="King L.M."/>
            <person name="Leal B."/>
            <person name="Lebow H."/>
            <person name="Lee S."/>
            <person name="LeVan J.M."/>
            <person name="Lewis L.C."/>
            <person name="London P."/>
            <person name="Lorensuhewa L.M."/>
            <person name="Loulseged H."/>
            <person name="Lovett D.A."/>
            <person name="Lucier A."/>
            <person name="Lucier R.L."/>
            <person name="Ma J."/>
            <person name="Madu R.C."/>
            <person name="Mapua P."/>
            <person name="Martindale A.D."/>
            <person name="Martinez E."/>
            <person name="Massey E."/>
            <person name="Mawhiney S."/>
            <person name="Meador M.G."/>
            <person name="Mendez S."/>
            <person name="Mercado C."/>
            <person name="Mercado I.C."/>
            <person name="Merritt C.E."/>
            <person name="Miner Z.L."/>
            <person name="Minja E."/>
            <person name="Mitchell T."/>
            <person name="Mohabbat F."/>
            <person name="Mohabbat K."/>
            <person name="Montgomery B."/>
            <person name="Moore N."/>
            <person name="Morris S."/>
            <person name="Munidasa M."/>
            <person name="Ngo R.N."/>
            <person name="Nguyen N.B."/>
            <person name="Nickerson E."/>
            <person name="Nwaokelemeh O.O."/>
            <person name="Nwokenkwo S."/>
            <person name="Obregon M."/>
            <person name="Oguh M."/>
            <person name="Oragunye N."/>
            <person name="Oviedo R.J."/>
            <person name="Parish B.J."/>
            <person name="Parker D.N."/>
            <person name="Parrish J."/>
            <person name="Parks K.L."/>
            <person name="Paul H.A."/>
            <person name="Payton B.A."/>
            <person name="Perez A."/>
            <person name="Perrin W."/>
            <person name="Pickens A."/>
            <person name="Primus E.L."/>
            <person name="Pu L.-L."/>
            <person name="Puazo M."/>
            <person name="Quiles M.M."/>
            <person name="Quiroz J.B."/>
            <person name="Rabata D."/>
            <person name="Reeves K."/>
            <person name="Ruiz S.J."/>
            <person name="Shao H."/>
            <person name="Sisson I."/>
            <person name="Sonaike T."/>
            <person name="Sorelle R.P."/>
            <person name="Sutton A.E."/>
            <person name="Svatek A.F."/>
            <person name="Svetz L.A."/>
            <person name="Tamerisa K.S."/>
            <person name="Taylor T.R."/>
            <person name="Teague B."/>
            <person name="Thomas N."/>
            <person name="Thorn R.D."/>
            <person name="Trejos Z.Y."/>
            <person name="Trevino B.K."/>
            <person name="Ukegbu O.N."/>
            <person name="Urban J.B."/>
            <person name="Vasquez L.I."/>
            <person name="Vera V.A."/>
            <person name="Villasana D.M."/>
            <person name="Wang L."/>
            <person name="Ward-Moore S."/>
            <person name="Warren J.T."/>
            <person name="Wei X."/>
            <person name="White F."/>
            <person name="Williamson A.L."/>
            <person name="Wleczyk R."/>
            <person name="Wooden H.S."/>
            <person name="Wooden S.H."/>
            <person name="Yen J."/>
            <person name="Yoon L."/>
            <person name="Yoon V."/>
            <person name="Zorrilla S.E."/>
            <person name="Nelson D."/>
            <person name="Kucherlapati R."/>
            <person name="Weinstock G."/>
            <person name="Gibbs R.A."/>
        </authorList>
    </citation>
    <scope>NUCLEOTIDE SEQUENCE [LARGE SCALE GENOMIC DNA]</scope>
</reference>
<reference key="7">
    <citation type="submission" date="2005-09" db="EMBL/GenBank/DDBJ databases">
        <authorList>
            <person name="Mural R.J."/>
            <person name="Istrail S."/>
            <person name="Sutton G.G."/>
            <person name="Florea L."/>
            <person name="Halpern A.L."/>
            <person name="Mobarry C.M."/>
            <person name="Lippert R."/>
            <person name="Walenz B."/>
            <person name="Shatkay H."/>
            <person name="Dew I."/>
            <person name="Miller J.R."/>
            <person name="Flanigan M.J."/>
            <person name="Edwards N.J."/>
            <person name="Bolanos R."/>
            <person name="Fasulo D."/>
            <person name="Halldorsson B.V."/>
            <person name="Hannenhalli S."/>
            <person name="Turner R."/>
            <person name="Yooseph S."/>
            <person name="Lu F."/>
            <person name="Nusskern D.R."/>
            <person name="Shue B.C."/>
            <person name="Zheng X.H."/>
            <person name="Zhong F."/>
            <person name="Delcher A.L."/>
            <person name="Huson D.H."/>
            <person name="Kravitz S.A."/>
            <person name="Mouchard L."/>
            <person name="Reinert K."/>
            <person name="Remington K.A."/>
            <person name="Clark A.G."/>
            <person name="Waterman M.S."/>
            <person name="Eichler E.E."/>
            <person name="Adams M.D."/>
            <person name="Hunkapiller M.W."/>
            <person name="Myers E.W."/>
            <person name="Venter J.C."/>
        </authorList>
    </citation>
    <scope>NUCLEOTIDE SEQUENCE [LARGE SCALE GENOMIC DNA]</scope>
</reference>
<reference key="8">
    <citation type="journal article" date="2004" name="Genome Res.">
        <title>The status, quality, and expansion of the NIH full-length cDNA project: the Mammalian Gene Collection (MGC).</title>
        <authorList>
            <consortium name="The MGC Project Team"/>
        </authorList>
    </citation>
    <scope>NUCLEOTIDE SEQUENCE [LARGE SCALE MRNA] (ISOFORM 2)</scope>
    <source>
        <tissue>Brain</tissue>
    </source>
</reference>
<reference key="9">
    <citation type="journal article" date="2012" name="Am. J. Hum. Genet.">
        <title>VAMP1 mutation causes dominant hereditary spastic ataxia in Newfoundland families.</title>
        <authorList>
            <person name="Bourassa C.V."/>
            <person name="Meijer I.A."/>
            <person name="Merner N.D."/>
            <person name="Grewal K.K."/>
            <person name="Stefanelli M.G."/>
            <person name="Hodgkinson K."/>
            <person name="Ives E.J."/>
            <person name="Pryse-Phillips W."/>
            <person name="Jog M."/>
            <person name="Boycott K."/>
            <person name="Grimes D.A."/>
            <person name="Goobie S."/>
            <person name="Leckey R."/>
            <person name="Dion P.A."/>
            <person name="Rouleau G.A."/>
        </authorList>
    </citation>
    <scope>INVOLVEMENT IN SPAX1</scope>
</reference>
<reference key="10">
    <citation type="journal article" date="2012" name="Microbiol. Immunol.">
        <title>Specificity of botulinum protease for human VAMP family proteins.</title>
        <authorList>
            <person name="Yamamoto H."/>
            <person name="Ida T."/>
            <person name="Tsutsuki H."/>
            <person name="Mori M."/>
            <person name="Matsumoto T."/>
            <person name="Kohda T."/>
            <person name="Mukamoto M."/>
            <person name="Goshima N."/>
            <person name="Kozaki S."/>
            <person name="Ihara H."/>
        </authorList>
    </citation>
    <scope>PROTEOLYTIC CLEAVAGE (MICROBIAL INFECTION) BY C.BOTULINUM NEUROTOXIN TYPES B; D AND F</scope>
    <scope>MUTAGENESIS OF GLU-42; ILE-48 AND SER-81</scope>
</reference>
<reference key="11">
    <citation type="journal article" date="2017" name="Ann. Clin. Transl. Neurol.">
        <title>Novel synaptobrevin-1 mutation causes fatal congenital myasthenic syndrome.</title>
        <authorList>
            <person name="Shen X.M."/>
            <person name="Scola R.H."/>
            <person name="Lorenzoni P.J."/>
            <person name="Kay C.S."/>
            <person name="Werneck L.C."/>
            <person name="Brengman J."/>
            <person name="Selcen D."/>
            <person name="Engel A.G."/>
        </authorList>
    </citation>
    <scope>INVOLVEMENT IN CMS25</scope>
</reference>
<reference key="12">
    <citation type="journal article" date="2017" name="Ann. Neurol.">
        <title>Homozygous mutations in VAMP1 cause a presynaptic congenital myasthenic syndrome.</title>
        <authorList>
            <consortium name="SYNAPS Study Group"/>
            <person name="Salpietro V."/>
            <person name="Lin W."/>
            <person name="Delle Vedove A."/>
            <person name="Storbeck M."/>
            <person name="Liu Y."/>
            <person name="Efthymiou S."/>
            <person name="Manole A."/>
            <person name="Wiethoff S."/>
            <person name="Ye Q."/>
            <person name="Saggar A."/>
            <person name="McElreavey K."/>
            <person name="Krishnakumar S.S."/>
            <person name="Pitt M."/>
            <person name="Bello O.D."/>
            <person name="Rothman J.E."/>
            <person name="Basel-Vanagaite L."/>
            <person name="Hubshman M.W."/>
            <person name="Aharoni S."/>
            <person name="Manzur A.Y."/>
            <person name="Wirth B."/>
            <person name="Houlden H."/>
        </authorList>
    </citation>
    <scope>INVOLVEMENT IN CMS25</scope>
    <scope>VARIANT CMS25 PRO-49</scope>
</reference>
<reference key="13">
    <citation type="journal article" date="2017" name="Hum. Genet.">
        <title>The landscape of genetic diseases in Saudi Arabia based on the first 1000 diagnostic panels and exomes.</title>
        <authorList>
            <person name="Monies D."/>
            <person name="Abouelhoda M."/>
            <person name="AlSayed M."/>
            <person name="Alhassnan Z."/>
            <person name="Alotaibi M."/>
            <person name="Kayyali H."/>
            <person name="Al-Owain M."/>
            <person name="Shah A."/>
            <person name="Rahbeeni Z."/>
            <person name="Al-Muhaizea M.A."/>
            <person name="Alzaidan H.I."/>
            <person name="Cupler E."/>
            <person name="Bohlega S."/>
            <person name="Faqeih E."/>
            <person name="Faden M."/>
            <person name="Alyounes B."/>
            <person name="Jaroudi D."/>
            <person name="Goljan E."/>
            <person name="Elbardisy H."/>
            <person name="Akilan A."/>
            <person name="Albar R."/>
            <person name="Aldhalaan H."/>
            <person name="Gulab S."/>
            <person name="Chedrawi A."/>
            <person name="Al Saud B.K."/>
            <person name="Kurdi W."/>
            <person name="Makhseed N."/>
            <person name="Alqasim T."/>
            <person name="El Khashab H.Y."/>
            <person name="Al-Mousa H."/>
            <person name="Alhashem A."/>
            <person name="Kanaan I."/>
            <person name="Algoufi T."/>
            <person name="Alsaleem K."/>
            <person name="Basha T.A."/>
            <person name="Al-Murshedi F."/>
            <person name="Khan S."/>
            <person name="Al-Kindy A."/>
            <person name="Alnemer M."/>
            <person name="Al-Hajjar S."/>
            <person name="Alyamani S."/>
            <person name="Aldhekri H."/>
            <person name="Al-Mehaidib A."/>
            <person name="Arnaout R."/>
            <person name="Dabbagh O."/>
            <person name="Shagrani M."/>
            <person name="Broering D."/>
            <person name="Tulbah M."/>
            <person name="Alqassmi A."/>
            <person name="Almugbel M."/>
            <person name="AlQuaiz M."/>
            <person name="Alsaman A."/>
            <person name="Al-Thihli K."/>
            <person name="Sulaiman R.A."/>
            <person name="Al-Dekhail W."/>
            <person name="Alsaegh A."/>
            <person name="Bashiri F.A."/>
            <person name="Qari A."/>
            <person name="Alhomadi S."/>
            <person name="Alkuraya H."/>
            <person name="Alsebayel M."/>
            <person name="Hamad M.H."/>
            <person name="Szonyi L."/>
            <person name="Abaalkhail F."/>
            <person name="Al-Mayouf S.M."/>
            <person name="Almojalli H."/>
            <person name="Alqadi K.S."/>
            <person name="Elsiesy H."/>
            <person name="Shuaib T.M."/>
            <person name="Seidahmed M.Z."/>
            <person name="Abosoudah I."/>
            <person name="Akleh H."/>
            <person name="AlGhonaium A."/>
            <person name="Alkharfy T.M."/>
            <person name="Al Mutairi F."/>
            <person name="Eyaid W."/>
            <person name="Alshanbary A."/>
            <person name="Sheikh F.R."/>
            <person name="Alsohaibani F.I."/>
            <person name="Alsonbul A."/>
            <person name="Al Tala S."/>
            <person name="Balkhy S."/>
            <person name="Bassiouni R."/>
            <person name="Alenizi A.S."/>
            <person name="Hussein M.H."/>
            <person name="Hassan S."/>
            <person name="Khalil M."/>
            <person name="Tabarki B."/>
            <person name="Alshahwan S."/>
            <person name="Oshi A."/>
            <person name="Sabr Y."/>
            <person name="Alsaadoun S."/>
            <person name="Salih M.A."/>
            <person name="Mohamed S."/>
            <person name="Sultana H."/>
            <person name="Tamim A."/>
            <person name="El-Haj M."/>
            <person name="Alshahrani S."/>
            <person name="Bubshait D.K."/>
            <person name="Alfadhel M."/>
            <person name="Faquih T."/>
            <person name="El-Kalioby M."/>
            <person name="Subhani S."/>
            <person name="Shah Z."/>
            <person name="Moghrabi N."/>
            <person name="Meyer B.F."/>
            <person name="Alkuraya F.S."/>
        </authorList>
    </citation>
    <scope>INVOLVEMENT IN CMS25</scope>
</reference>
<reference key="14">
    <citation type="journal article" date="2018" name="Sci. Rep.">
        <title>Structural characterisation of the catalytic domain of botulinum neurotoxin X - high activity and unique substrate specificity.</title>
        <authorList>
            <person name="Masuyer G."/>
            <person name="Zhang S."/>
            <person name="Barkho S."/>
            <person name="Shen Y."/>
            <person name="Henriksson L."/>
            <person name="Kosenina S."/>
            <person name="Dong M."/>
            <person name="Stenmark P."/>
        </authorList>
    </citation>
    <scope>PROTEOLYTIC CLEAVAGE (MICROBIAL INFECTION) BY C.BOTULINUM NEUROTOXIN TYPE X</scope>
</reference>
<evidence type="ECO:0000250" key="1"/>
<evidence type="ECO:0000250" key="2">
    <source>
        <dbReference type="UniProtKB" id="Q62442"/>
    </source>
</evidence>
<evidence type="ECO:0000255" key="3"/>
<evidence type="ECO:0000255" key="4">
    <source>
        <dbReference type="PROSITE-ProRule" id="PRU00290"/>
    </source>
</evidence>
<evidence type="ECO:0000256" key="5">
    <source>
        <dbReference type="SAM" id="MobiDB-lite"/>
    </source>
</evidence>
<evidence type="ECO:0000269" key="6">
    <source>
    </source>
</evidence>
<evidence type="ECO:0000269" key="7">
    <source>
    </source>
</evidence>
<evidence type="ECO:0000269" key="8">
    <source>
    </source>
</evidence>
<evidence type="ECO:0000269" key="9">
    <source>
    </source>
</evidence>
<evidence type="ECO:0000269" key="10">
    <source>
    </source>
</evidence>
<evidence type="ECO:0000269" key="11">
    <source>
    </source>
</evidence>
<evidence type="ECO:0000269" key="12">
    <source>
    </source>
</evidence>
<evidence type="ECO:0000303" key="13">
    <source>
    </source>
</evidence>
<evidence type="ECO:0000303" key="14">
    <source>
    </source>
</evidence>
<evidence type="ECO:0000303" key="15">
    <source>
    </source>
</evidence>
<evidence type="ECO:0000303" key="16">
    <source>
    </source>
</evidence>
<evidence type="ECO:0000303" key="17">
    <source ref="4"/>
</evidence>
<evidence type="ECO:0000305" key="18"/>
<evidence type="ECO:0000305" key="19">
    <source>
    </source>
</evidence>
<evidence type="ECO:0000305" key="20">
    <source>
    </source>
</evidence>
<organism>
    <name type="scientific">Homo sapiens</name>
    <name type="common">Human</name>
    <dbReference type="NCBI Taxonomy" id="9606"/>
    <lineage>
        <taxon>Eukaryota</taxon>
        <taxon>Metazoa</taxon>
        <taxon>Chordata</taxon>
        <taxon>Craniata</taxon>
        <taxon>Vertebrata</taxon>
        <taxon>Euteleostomi</taxon>
        <taxon>Mammalia</taxon>
        <taxon>Eutheria</taxon>
        <taxon>Euarchontoglires</taxon>
        <taxon>Primates</taxon>
        <taxon>Haplorrhini</taxon>
        <taxon>Catarrhini</taxon>
        <taxon>Hominidae</taxon>
        <taxon>Homo</taxon>
    </lineage>
</organism>
<feature type="chain" id="PRO_0000206719" description="Vesicle-associated membrane protein 1">
    <location>
        <begin position="1"/>
        <end position="118"/>
    </location>
</feature>
<feature type="topological domain" description="Cytoplasmic" evidence="3">
    <location>
        <begin position="1"/>
        <end position="96"/>
    </location>
</feature>
<feature type="transmembrane region" description="Helical; Anchor for type IV membrane protein" evidence="3">
    <location>
        <begin position="97"/>
        <end position="116"/>
    </location>
</feature>
<feature type="topological domain" description="Vesicular" evidence="3">
    <location>
        <begin position="117"/>
        <end position="118"/>
    </location>
</feature>
<feature type="domain" description="v-SNARE coiled-coil homology" evidence="4">
    <location>
        <begin position="33"/>
        <end position="93"/>
    </location>
</feature>
<feature type="region of interest" description="Disordered" evidence="5">
    <location>
        <begin position="1"/>
        <end position="36"/>
    </location>
</feature>
<feature type="site" description="(Microbial infection) Cleavage; by C.botulinum neurotoxin type F (BoNT/F, botF)" evidence="19">
    <location>
        <begin position="60"/>
        <end position="61"/>
    </location>
</feature>
<feature type="site" description="(Microbial infection) Cleavage; by C.botulinum neurotoxin type D (BoNT/D, botD)" evidence="19">
    <location>
        <begin position="61"/>
        <end position="62"/>
    </location>
</feature>
<feature type="site" description="(Microbial infection) Cleavage; by C.botulinum neurotoxin type X (BoNT/X)" evidence="20">
    <location>
        <begin position="68"/>
        <end position="69"/>
    </location>
</feature>
<feature type="site" description="(Microbial infection) Cleavage; by C.botulinum neurotoxin type B (BoNT/B, botB)" evidence="19">
    <location>
        <begin position="78"/>
        <end position="79"/>
    </location>
</feature>
<feature type="modified residue" description="Phosphoserine" evidence="2">
    <location>
        <position position="63"/>
    </location>
</feature>
<feature type="splice variant" id="VSP_029185" description="In isoform 2." evidence="13 14">
    <original>IYFFT</original>
    <variation>SKYR</variation>
    <location>
        <begin position="114"/>
        <end position="118"/>
    </location>
</feature>
<feature type="splice variant" id="VSP_006325" description="In isoform 3." evidence="16 17">
    <original>IYFFT</original>
    <variation>RRD</variation>
    <location>
        <begin position="114"/>
        <end position="118"/>
    </location>
</feature>
<feature type="sequence variant" id="VAR_082265" description="In CMS25; uncertain significance; dbSNP:rs754046104." evidence="9">
    <original>R</original>
    <variation>P</variation>
    <location>
        <position position="49"/>
    </location>
</feature>
<feature type="mutagenesis site" description="No change in susceptibility to C.botulinum BoNT/B, BoNT/D or BoNT/F." evidence="6">
    <original>E</original>
    <variation>D</variation>
    <location>
        <position position="42"/>
    </location>
</feature>
<feature type="mutagenesis site" description="1000-fold increase in susceptibility to C.botulinum BoNT/D, no change in susceptibility to BoNT/B or BoNT/F." evidence="6">
    <original>I</original>
    <variation>M</variation>
    <location>
        <position position="48"/>
    </location>
</feature>
<feature type="mutagenesis site" description="No change in susceptibility to C.botulinum BoNT/B, BoNT/D or BoNT/F." evidence="6">
    <original>S</original>
    <variation>T</variation>
    <location>
        <position position="81"/>
    </location>
</feature>
<feature type="sequence conflict" description="In Ref. 3; CAA88760." evidence="18" ref="3">
    <original>A</original>
    <variation>T</variation>
    <location>
        <position position="103"/>
    </location>
</feature>